<comment type="function">
    <text evidence="1">Binds 23S rRNA and is also seen to make contacts with the A and possibly P site tRNAs.</text>
</comment>
<comment type="subunit">
    <text evidence="1">Part of the 50S ribosomal subunit.</text>
</comment>
<comment type="similarity">
    <text evidence="1">Belongs to the universal ribosomal protein uL16 family.</text>
</comment>
<reference key="1">
    <citation type="journal article" date="1998" name="Science">
        <title>Complete genome sequence of Treponema pallidum, the syphilis spirochete.</title>
        <authorList>
            <person name="Fraser C.M."/>
            <person name="Norris S.J."/>
            <person name="Weinstock G.M."/>
            <person name="White O."/>
            <person name="Sutton G.G."/>
            <person name="Dodson R.J."/>
            <person name="Gwinn M.L."/>
            <person name="Hickey E.K."/>
            <person name="Clayton R.A."/>
            <person name="Ketchum K.A."/>
            <person name="Sodergren E."/>
            <person name="Hardham J.M."/>
            <person name="McLeod M.P."/>
            <person name="Salzberg S.L."/>
            <person name="Peterson J.D."/>
            <person name="Khalak H.G."/>
            <person name="Richardson D.L."/>
            <person name="Howell J.K."/>
            <person name="Chidambaram M."/>
            <person name="Utterback T.R."/>
            <person name="McDonald L.A."/>
            <person name="Artiach P."/>
            <person name="Bowman C."/>
            <person name="Cotton M.D."/>
            <person name="Fujii C."/>
            <person name="Garland S.A."/>
            <person name="Hatch B."/>
            <person name="Horst K."/>
            <person name="Roberts K.M."/>
            <person name="Sandusky M."/>
            <person name="Weidman J.F."/>
            <person name="Smith H.O."/>
            <person name="Venter J.C."/>
        </authorList>
    </citation>
    <scope>NUCLEOTIDE SEQUENCE [LARGE SCALE GENOMIC DNA]</scope>
    <source>
        <strain>Nichols</strain>
    </source>
</reference>
<organism>
    <name type="scientific">Treponema pallidum (strain Nichols)</name>
    <dbReference type="NCBI Taxonomy" id="243276"/>
    <lineage>
        <taxon>Bacteria</taxon>
        <taxon>Pseudomonadati</taxon>
        <taxon>Spirochaetota</taxon>
        <taxon>Spirochaetia</taxon>
        <taxon>Spirochaetales</taxon>
        <taxon>Treponemataceae</taxon>
        <taxon>Treponema</taxon>
    </lineage>
</organism>
<protein>
    <recommendedName>
        <fullName evidence="1">Large ribosomal subunit protein uL16</fullName>
    </recommendedName>
    <alternativeName>
        <fullName evidence="2">50S ribosomal protein L16</fullName>
    </alternativeName>
</protein>
<sequence>MALSPKRVKYRKVQRGRVKGDATRCNAVDFGAYALVCLEPFWLTSRQIEAARVALNRRIKRGGKLWIRVFPDKPYSKKPAETRMGKGKGSPEYWVAVVKPGTVLFELMGVERALAEQAMLLAGSKLPIKTRFAERVQEI</sequence>
<name>RL16_TREPA</name>
<feature type="chain" id="PRO_0000062240" description="Large ribosomal subunit protein uL16">
    <location>
        <begin position="1"/>
        <end position="139"/>
    </location>
</feature>
<dbReference type="EMBL" id="AE000520">
    <property type="protein sequence ID" value="AAC65181.1"/>
    <property type="molecule type" value="Genomic_DNA"/>
</dbReference>
<dbReference type="PIR" id="F71355">
    <property type="entry name" value="F71355"/>
</dbReference>
<dbReference type="RefSeq" id="WP_010881643.1">
    <property type="nucleotide sequence ID" value="NC_021490.2"/>
</dbReference>
<dbReference type="SMR" id="O83226"/>
<dbReference type="STRING" id="243276.TP_0196"/>
<dbReference type="EnsemblBacteria" id="AAC65181">
    <property type="protein sequence ID" value="AAC65181"/>
    <property type="gene ID" value="TP_0196"/>
</dbReference>
<dbReference type="GeneID" id="93875984"/>
<dbReference type="KEGG" id="tpa:TP_0196"/>
<dbReference type="KEGG" id="tpw:TPANIC_0196"/>
<dbReference type="eggNOG" id="COG0197">
    <property type="taxonomic scope" value="Bacteria"/>
</dbReference>
<dbReference type="HOGENOM" id="CLU_078858_2_1_12"/>
<dbReference type="OrthoDB" id="9802589at2"/>
<dbReference type="Proteomes" id="UP000000811">
    <property type="component" value="Chromosome"/>
</dbReference>
<dbReference type="GO" id="GO:0022625">
    <property type="term" value="C:cytosolic large ribosomal subunit"/>
    <property type="evidence" value="ECO:0007669"/>
    <property type="project" value="TreeGrafter"/>
</dbReference>
<dbReference type="GO" id="GO:0019843">
    <property type="term" value="F:rRNA binding"/>
    <property type="evidence" value="ECO:0007669"/>
    <property type="project" value="UniProtKB-UniRule"/>
</dbReference>
<dbReference type="GO" id="GO:0003735">
    <property type="term" value="F:structural constituent of ribosome"/>
    <property type="evidence" value="ECO:0007669"/>
    <property type="project" value="InterPro"/>
</dbReference>
<dbReference type="GO" id="GO:0000049">
    <property type="term" value="F:tRNA binding"/>
    <property type="evidence" value="ECO:0007669"/>
    <property type="project" value="UniProtKB-KW"/>
</dbReference>
<dbReference type="GO" id="GO:0006412">
    <property type="term" value="P:translation"/>
    <property type="evidence" value="ECO:0007669"/>
    <property type="project" value="UniProtKB-UniRule"/>
</dbReference>
<dbReference type="CDD" id="cd01433">
    <property type="entry name" value="Ribosomal_L16_L10e"/>
    <property type="match status" value="1"/>
</dbReference>
<dbReference type="FunFam" id="3.90.1170.10:FF:000001">
    <property type="entry name" value="50S ribosomal protein L16"/>
    <property type="match status" value="1"/>
</dbReference>
<dbReference type="Gene3D" id="3.90.1170.10">
    <property type="entry name" value="Ribosomal protein L10e/L16"/>
    <property type="match status" value="1"/>
</dbReference>
<dbReference type="HAMAP" id="MF_01342">
    <property type="entry name" value="Ribosomal_uL16"/>
    <property type="match status" value="1"/>
</dbReference>
<dbReference type="InterPro" id="IPR047873">
    <property type="entry name" value="Ribosomal_uL16"/>
</dbReference>
<dbReference type="InterPro" id="IPR000114">
    <property type="entry name" value="Ribosomal_uL16_bact-type"/>
</dbReference>
<dbReference type="InterPro" id="IPR020798">
    <property type="entry name" value="Ribosomal_uL16_CS"/>
</dbReference>
<dbReference type="InterPro" id="IPR016180">
    <property type="entry name" value="Ribosomal_uL16_dom"/>
</dbReference>
<dbReference type="InterPro" id="IPR036920">
    <property type="entry name" value="Ribosomal_uL16_sf"/>
</dbReference>
<dbReference type="NCBIfam" id="TIGR01164">
    <property type="entry name" value="rplP_bact"/>
    <property type="match status" value="1"/>
</dbReference>
<dbReference type="PANTHER" id="PTHR12220">
    <property type="entry name" value="50S/60S RIBOSOMAL PROTEIN L16"/>
    <property type="match status" value="1"/>
</dbReference>
<dbReference type="PANTHER" id="PTHR12220:SF13">
    <property type="entry name" value="LARGE RIBOSOMAL SUBUNIT PROTEIN UL16M"/>
    <property type="match status" value="1"/>
</dbReference>
<dbReference type="Pfam" id="PF00252">
    <property type="entry name" value="Ribosomal_L16"/>
    <property type="match status" value="1"/>
</dbReference>
<dbReference type="PRINTS" id="PR00060">
    <property type="entry name" value="RIBOSOMALL16"/>
</dbReference>
<dbReference type="SUPFAM" id="SSF54686">
    <property type="entry name" value="Ribosomal protein L16p/L10e"/>
    <property type="match status" value="1"/>
</dbReference>
<dbReference type="PROSITE" id="PS00586">
    <property type="entry name" value="RIBOSOMAL_L16_1"/>
    <property type="match status" value="1"/>
</dbReference>
<dbReference type="PROSITE" id="PS00701">
    <property type="entry name" value="RIBOSOMAL_L16_2"/>
    <property type="match status" value="1"/>
</dbReference>
<keyword id="KW-1185">Reference proteome</keyword>
<keyword id="KW-0687">Ribonucleoprotein</keyword>
<keyword id="KW-0689">Ribosomal protein</keyword>
<keyword id="KW-0694">RNA-binding</keyword>
<keyword id="KW-0699">rRNA-binding</keyword>
<keyword id="KW-0820">tRNA-binding</keyword>
<accession>O83226</accession>
<gene>
    <name evidence="1" type="primary">rplP</name>
    <name type="ordered locus">TP_0196</name>
</gene>
<evidence type="ECO:0000255" key="1">
    <source>
        <dbReference type="HAMAP-Rule" id="MF_01342"/>
    </source>
</evidence>
<evidence type="ECO:0000305" key="2"/>
<proteinExistence type="inferred from homology"/>